<proteinExistence type="evidence at protein level"/>
<comment type="cofactor">
    <cofactor evidence="1">
        <name>FAD</name>
        <dbReference type="ChEBI" id="CHEBI:57692"/>
    </cofactor>
</comment>
<comment type="alternative products">
    <event type="alternative splicing"/>
    <isoform>
        <id>Q9DBS4-1</id>
        <name>1</name>
        <sequence type="displayed"/>
    </isoform>
    <isoform>
        <id>Q9DBS4-2</id>
        <name>2</name>
        <sequence type="described" ref="VSP_028240"/>
    </isoform>
</comment>
<comment type="similarity">
    <text evidence="3">Belongs to the acyl-CoA oxidase family.</text>
</comment>
<sequence>MTGWSGLFIEVPLYRLASKVCCHLRGPQGFLQRACQGVCCLPRDSRAAGIMEEKRKSFISQILILGEVLCMVDVSMSIKCGILFLLFGGAISNLGSPEHVTKWFWPLKEQKYTGMFAMTERGHGSNVRGIQTEATFDLDNQEFVIDMPCENAHKMYIGNAMHGNYAAVFAQLIIEGKSQGPHCFIVPIRDENGNLYPGVTAIDMMHKEGMNGVDNGILIFDKVRIPRENLLDKFGSVTPDGQYHSPIQSKNARFNAILATLTPSRLAVTFQALGAMKLGLMIAIRYSHSRRQFGPKDKEEVKIIEHQMQALRLMSHLATALAVTFTSRHADDILDEDIFQGRALTNSRSLQALMAGLKAYSTWETVSCLQDCRECTGGMGYMMETRISDLKCDTDVFVTFEGDNVVMLQVVARELLAQYSKQHKKNLLLGVIQNWTATAGDKLRTSFLAFNTDTVGCLAFLLKAVNFRERVLQRSLVSRIYYKVVTKKGDFFSAWNSCMHHVTSLSLAHIHRVALEQFTTAVRQCPNREDQALLMKFCLLYGTKLVFQERGWYLEHKYLTPKASMLIRAQLLNLCESVKDDALKVISAFNIPHITIRAPKTGIPNPGAAEAAYPAPMQPLVRDAARAQLAKL</sequence>
<dbReference type="EC" id="1.3.3.-"/>
<dbReference type="EMBL" id="AK004775">
    <property type="protein sequence ID" value="BAB23553.1"/>
    <property type="molecule type" value="mRNA"/>
</dbReference>
<dbReference type="EMBL" id="AL805950">
    <property type="status" value="NOT_ANNOTATED_CDS"/>
    <property type="molecule type" value="Genomic_DNA"/>
</dbReference>
<dbReference type="EMBL" id="AL844481">
    <property type="status" value="NOT_ANNOTATED_CDS"/>
    <property type="molecule type" value="Genomic_DNA"/>
</dbReference>
<dbReference type="EMBL" id="BC048717">
    <property type="protein sequence ID" value="AAH48717.1"/>
    <property type="molecule type" value="mRNA"/>
</dbReference>
<dbReference type="CCDS" id="CCDS16711.1">
    <molecule id="Q9DBS4-1"/>
</dbReference>
<dbReference type="RefSeq" id="NP_083041.1">
    <molecule id="Q9DBS4-1"/>
    <property type="nucleotide sequence ID" value="NM_028765.3"/>
</dbReference>
<dbReference type="RefSeq" id="XP_011238110.1">
    <molecule id="Q9DBS4-2"/>
    <property type="nucleotide sequence ID" value="XM_011239808.1"/>
</dbReference>
<dbReference type="SMR" id="Q9DBS4"/>
<dbReference type="FunCoup" id="Q9DBS4">
    <property type="interactions" value="16"/>
</dbReference>
<dbReference type="STRING" id="10090.ENSMUSP00000028859"/>
<dbReference type="iPTMnet" id="Q9DBS4"/>
<dbReference type="PhosphoSitePlus" id="Q9DBS4"/>
<dbReference type="PaxDb" id="10090-ENSMUSP00000028859"/>
<dbReference type="ProteomicsDB" id="285597">
    <molecule id="Q9DBS4-1"/>
</dbReference>
<dbReference type="ProteomicsDB" id="285598">
    <molecule id="Q9DBS4-2"/>
</dbReference>
<dbReference type="Antibodypedia" id="55058">
    <property type="antibodies" value="39 antibodies from 13 providers"/>
</dbReference>
<dbReference type="DNASU" id="74121"/>
<dbReference type="Ensembl" id="ENSMUST00000028859.8">
    <molecule id="Q9DBS4-1"/>
    <property type="protein sequence ID" value="ENSMUSP00000028859.2"/>
    <property type="gene ID" value="ENSMUSG00000027380.11"/>
</dbReference>
<dbReference type="Ensembl" id="ENSMUST00000110344.2">
    <molecule id="Q9DBS4-2"/>
    <property type="protein sequence ID" value="ENSMUSP00000105973.2"/>
    <property type="gene ID" value="ENSMUSG00000027380.11"/>
</dbReference>
<dbReference type="GeneID" id="74121"/>
<dbReference type="KEGG" id="mmu:74121"/>
<dbReference type="UCSC" id="uc008mgg.2">
    <molecule id="Q9DBS4-1"/>
    <property type="organism name" value="mouse"/>
</dbReference>
<dbReference type="AGR" id="MGI:1921371"/>
<dbReference type="CTD" id="55289"/>
<dbReference type="MGI" id="MGI:1921371">
    <property type="gene designation" value="Acoxl"/>
</dbReference>
<dbReference type="VEuPathDB" id="HostDB:ENSMUSG00000027380"/>
<dbReference type="eggNOG" id="KOG0135">
    <property type="taxonomic scope" value="Eukaryota"/>
</dbReference>
<dbReference type="GeneTree" id="ENSGT00940000161693"/>
<dbReference type="HOGENOM" id="CLU_014629_4_1_1"/>
<dbReference type="InParanoid" id="Q9DBS4"/>
<dbReference type="OMA" id="GHIGIFL"/>
<dbReference type="OrthoDB" id="538336at2759"/>
<dbReference type="PhylomeDB" id="Q9DBS4"/>
<dbReference type="TreeFam" id="TF354292"/>
<dbReference type="Reactome" id="R-MMU-389887">
    <property type="pathway name" value="Beta-oxidation of pristanoyl-CoA"/>
</dbReference>
<dbReference type="BioGRID-ORCS" id="74121">
    <property type="hits" value="4 hits in 77 CRISPR screens"/>
</dbReference>
<dbReference type="ChiTaRS" id="Acoxl">
    <property type="organism name" value="mouse"/>
</dbReference>
<dbReference type="PRO" id="PR:Q9DBS4"/>
<dbReference type="Proteomes" id="UP000000589">
    <property type="component" value="Chromosome 2"/>
</dbReference>
<dbReference type="RNAct" id="Q9DBS4">
    <property type="molecule type" value="protein"/>
</dbReference>
<dbReference type="Bgee" id="ENSMUSG00000027380">
    <property type="expression patterns" value="Expressed in tail skin and 35 other cell types or tissues"/>
</dbReference>
<dbReference type="GO" id="GO:0005777">
    <property type="term" value="C:peroxisome"/>
    <property type="evidence" value="ECO:0007669"/>
    <property type="project" value="InterPro"/>
</dbReference>
<dbReference type="GO" id="GO:0003997">
    <property type="term" value="F:acyl-CoA oxidase activity"/>
    <property type="evidence" value="ECO:0007669"/>
    <property type="project" value="InterPro"/>
</dbReference>
<dbReference type="GO" id="GO:0071949">
    <property type="term" value="F:FAD binding"/>
    <property type="evidence" value="ECO:0007669"/>
    <property type="project" value="InterPro"/>
</dbReference>
<dbReference type="GO" id="GO:0006635">
    <property type="term" value="P:fatty acid beta-oxidation"/>
    <property type="evidence" value="ECO:0007669"/>
    <property type="project" value="InterPro"/>
</dbReference>
<dbReference type="FunFam" id="1.20.140.10:FF:000033">
    <property type="entry name" value="Acyl-coenzyme A oxidase"/>
    <property type="match status" value="1"/>
</dbReference>
<dbReference type="FunFam" id="1.20.140.10:FF:000034">
    <property type="entry name" value="Acyl-coenzyme A oxidase"/>
    <property type="match status" value="1"/>
</dbReference>
<dbReference type="FunFam" id="2.40.110.10:FF:000019">
    <property type="entry name" value="Acyl-coenzyme A oxidase"/>
    <property type="match status" value="1"/>
</dbReference>
<dbReference type="Gene3D" id="2.40.110.10">
    <property type="entry name" value="Butyryl-CoA Dehydrogenase, subunit A, domain 2"/>
    <property type="match status" value="1"/>
</dbReference>
<dbReference type="Gene3D" id="1.20.140.10">
    <property type="entry name" value="Butyryl-CoA Dehydrogenase, subunit A, domain 3"/>
    <property type="match status" value="2"/>
</dbReference>
<dbReference type="InterPro" id="IPR055060">
    <property type="entry name" value="ACOX_C_alpha1"/>
</dbReference>
<dbReference type="InterPro" id="IPR006091">
    <property type="entry name" value="Acyl-CoA_Oxase/DH_mid-dom"/>
</dbReference>
<dbReference type="InterPro" id="IPR046373">
    <property type="entry name" value="Acyl-CoA_Oxase/DH_mid-dom_sf"/>
</dbReference>
<dbReference type="InterPro" id="IPR012258">
    <property type="entry name" value="Acyl-CoA_oxidase"/>
</dbReference>
<dbReference type="InterPro" id="IPR002655">
    <property type="entry name" value="Acyl-CoA_oxidase_C"/>
</dbReference>
<dbReference type="InterPro" id="IPR036250">
    <property type="entry name" value="AcylCo_DH-like_C"/>
</dbReference>
<dbReference type="InterPro" id="IPR009100">
    <property type="entry name" value="AcylCoA_DH/oxidase_NM_dom_sf"/>
</dbReference>
<dbReference type="PANTHER" id="PTHR10909:SF352">
    <property type="entry name" value="ACYL-COENZYME A OXIDASE-LIKE PROTEIN"/>
    <property type="match status" value="1"/>
</dbReference>
<dbReference type="PANTHER" id="PTHR10909">
    <property type="entry name" value="ELECTRON TRANSPORT OXIDOREDUCTASE"/>
    <property type="match status" value="1"/>
</dbReference>
<dbReference type="Pfam" id="PF01756">
    <property type="entry name" value="ACOX"/>
    <property type="match status" value="1"/>
</dbReference>
<dbReference type="Pfam" id="PF22924">
    <property type="entry name" value="ACOX_C_alpha1"/>
    <property type="match status" value="1"/>
</dbReference>
<dbReference type="Pfam" id="PF02770">
    <property type="entry name" value="Acyl-CoA_dh_M"/>
    <property type="match status" value="1"/>
</dbReference>
<dbReference type="PIRSF" id="PIRSF000168">
    <property type="entry name" value="Acyl-CoA_oxidase"/>
    <property type="match status" value="1"/>
</dbReference>
<dbReference type="SUPFAM" id="SSF47203">
    <property type="entry name" value="Acyl-CoA dehydrogenase C-terminal domain-like"/>
    <property type="match status" value="2"/>
</dbReference>
<dbReference type="SUPFAM" id="SSF56645">
    <property type="entry name" value="Acyl-CoA dehydrogenase NM domain-like"/>
    <property type="match status" value="1"/>
</dbReference>
<evidence type="ECO:0000250" key="1"/>
<evidence type="ECO:0000303" key="2">
    <source>
    </source>
</evidence>
<evidence type="ECO:0000305" key="3"/>
<gene>
    <name type="primary">Acoxl</name>
</gene>
<keyword id="KW-0025">Alternative splicing</keyword>
<keyword id="KW-0274">FAD</keyword>
<keyword id="KW-0285">Flavoprotein</keyword>
<keyword id="KW-0560">Oxidoreductase</keyword>
<keyword id="KW-1185">Reference proteome</keyword>
<accession>Q9DBS4</accession>
<accession>Q80ZM1</accession>
<name>ACOXL_MOUSE</name>
<feature type="chain" id="PRO_0000305101" description="Acyl-coenzyme A oxidase-like protein">
    <location>
        <begin position="1"/>
        <end position="632"/>
    </location>
</feature>
<feature type="binding site" evidence="1">
    <location>
        <begin position="376"/>
        <end position="381"/>
    </location>
    <ligand>
        <name>FAD</name>
        <dbReference type="ChEBI" id="CHEBI:57692"/>
    </ligand>
</feature>
<feature type="splice variant" id="VSP_028240" description="In isoform 2." evidence="2">
    <location>
        <begin position="1"/>
        <end position="280"/>
    </location>
</feature>
<reference key="1">
    <citation type="journal article" date="2005" name="Science">
        <title>The transcriptional landscape of the mammalian genome.</title>
        <authorList>
            <person name="Carninci P."/>
            <person name="Kasukawa T."/>
            <person name="Katayama S."/>
            <person name="Gough J."/>
            <person name="Frith M.C."/>
            <person name="Maeda N."/>
            <person name="Oyama R."/>
            <person name="Ravasi T."/>
            <person name="Lenhard B."/>
            <person name="Wells C."/>
            <person name="Kodzius R."/>
            <person name="Shimokawa K."/>
            <person name="Bajic V.B."/>
            <person name="Brenner S.E."/>
            <person name="Batalov S."/>
            <person name="Forrest A.R."/>
            <person name="Zavolan M."/>
            <person name="Davis M.J."/>
            <person name="Wilming L.G."/>
            <person name="Aidinis V."/>
            <person name="Allen J.E."/>
            <person name="Ambesi-Impiombato A."/>
            <person name="Apweiler R."/>
            <person name="Aturaliya R.N."/>
            <person name="Bailey T.L."/>
            <person name="Bansal M."/>
            <person name="Baxter L."/>
            <person name="Beisel K.W."/>
            <person name="Bersano T."/>
            <person name="Bono H."/>
            <person name="Chalk A.M."/>
            <person name="Chiu K.P."/>
            <person name="Choudhary V."/>
            <person name="Christoffels A."/>
            <person name="Clutterbuck D.R."/>
            <person name="Crowe M.L."/>
            <person name="Dalla E."/>
            <person name="Dalrymple B.P."/>
            <person name="de Bono B."/>
            <person name="Della Gatta G."/>
            <person name="di Bernardo D."/>
            <person name="Down T."/>
            <person name="Engstrom P."/>
            <person name="Fagiolini M."/>
            <person name="Faulkner G."/>
            <person name="Fletcher C.F."/>
            <person name="Fukushima T."/>
            <person name="Furuno M."/>
            <person name="Futaki S."/>
            <person name="Gariboldi M."/>
            <person name="Georgii-Hemming P."/>
            <person name="Gingeras T.R."/>
            <person name="Gojobori T."/>
            <person name="Green R.E."/>
            <person name="Gustincich S."/>
            <person name="Harbers M."/>
            <person name="Hayashi Y."/>
            <person name="Hensch T.K."/>
            <person name="Hirokawa N."/>
            <person name="Hill D."/>
            <person name="Huminiecki L."/>
            <person name="Iacono M."/>
            <person name="Ikeo K."/>
            <person name="Iwama A."/>
            <person name="Ishikawa T."/>
            <person name="Jakt M."/>
            <person name="Kanapin A."/>
            <person name="Katoh M."/>
            <person name="Kawasawa Y."/>
            <person name="Kelso J."/>
            <person name="Kitamura H."/>
            <person name="Kitano H."/>
            <person name="Kollias G."/>
            <person name="Krishnan S.P."/>
            <person name="Kruger A."/>
            <person name="Kummerfeld S.K."/>
            <person name="Kurochkin I.V."/>
            <person name="Lareau L.F."/>
            <person name="Lazarevic D."/>
            <person name="Lipovich L."/>
            <person name="Liu J."/>
            <person name="Liuni S."/>
            <person name="McWilliam S."/>
            <person name="Madan Babu M."/>
            <person name="Madera M."/>
            <person name="Marchionni L."/>
            <person name="Matsuda H."/>
            <person name="Matsuzawa S."/>
            <person name="Miki H."/>
            <person name="Mignone F."/>
            <person name="Miyake S."/>
            <person name="Morris K."/>
            <person name="Mottagui-Tabar S."/>
            <person name="Mulder N."/>
            <person name="Nakano N."/>
            <person name="Nakauchi H."/>
            <person name="Ng P."/>
            <person name="Nilsson R."/>
            <person name="Nishiguchi S."/>
            <person name="Nishikawa S."/>
            <person name="Nori F."/>
            <person name="Ohara O."/>
            <person name="Okazaki Y."/>
            <person name="Orlando V."/>
            <person name="Pang K.C."/>
            <person name="Pavan W.J."/>
            <person name="Pavesi G."/>
            <person name="Pesole G."/>
            <person name="Petrovsky N."/>
            <person name="Piazza S."/>
            <person name="Reed J."/>
            <person name="Reid J.F."/>
            <person name="Ring B.Z."/>
            <person name="Ringwald M."/>
            <person name="Rost B."/>
            <person name="Ruan Y."/>
            <person name="Salzberg S.L."/>
            <person name="Sandelin A."/>
            <person name="Schneider C."/>
            <person name="Schoenbach C."/>
            <person name="Sekiguchi K."/>
            <person name="Semple C.A."/>
            <person name="Seno S."/>
            <person name="Sessa L."/>
            <person name="Sheng Y."/>
            <person name="Shibata Y."/>
            <person name="Shimada H."/>
            <person name="Shimada K."/>
            <person name="Silva D."/>
            <person name="Sinclair B."/>
            <person name="Sperling S."/>
            <person name="Stupka E."/>
            <person name="Sugiura K."/>
            <person name="Sultana R."/>
            <person name="Takenaka Y."/>
            <person name="Taki K."/>
            <person name="Tammoja K."/>
            <person name="Tan S.L."/>
            <person name="Tang S."/>
            <person name="Taylor M.S."/>
            <person name="Tegner J."/>
            <person name="Teichmann S.A."/>
            <person name="Ueda H.R."/>
            <person name="van Nimwegen E."/>
            <person name="Verardo R."/>
            <person name="Wei C.L."/>
            <person name="Yagi K."/>
            <person name="Yamanishi H."/>
            <person name="Zabarovsky E."/>
            <person name="Zhu S."/>
            <person name="Zimmer A."/>
            <person name="Hide W."/>
            <person name="Bult C."/>
            <person name="Grimmond S.M."/>
            <person name="Teasdale R.D."/>
            <person name="Liu E.T."/>
            <person name="Brusic V."/>
            <person name="Quackenbush J."/>
            <person name="Wahlestedt C."/>
            <person name="Mattick J.S."/>
            <person name="Hume D.A."/>
            <person name="Kai C."/>
            <person name="Sasaki D."/>
            <person name="Tomaru Y."/>
            <person name="Fukuda S."/>
            <person name="Kanamori-Katayama M."/>
            <person name="Suzuki M."/>
            <person name="Aoki J."/>
            <person name="Arakawa T."/>
            <person name="Iida J."/>
            <person name="Imamura K."/>
            <person name="Itoh M."/>
            <person name="Kato T."/>
            <person name="Kawaji H."/>
            <person name="Kawagashira N."/>
            <person name="Kawashima T."/>
            <person name="Kojima M."/>
            <person name="Kondo S."/>
            <person name="Konno H."/>
            <person name="Nakano K."/>
            <person name="Ninomiya N."/>
            <person name="Nishio T."/>
            <person name="Okada M."/>
            <person name="Plessy C."/>
            <person name="Shibata K."/>
            <person name="Shiraki T."/>
            <person name="Suzuki S."/>
            <person name="Tagami M."/>
            <person name="Waki K."/>
            <person name="Watahiki A."/>
            <person name="Okamura-Oho Y."/>
            <person name="Suzuki H."/>
            <person name="Kawai J."/>
            <person name="Hayashizaki Y."/>
        </authorList>
    </citation>
    <scope>NUCLEOTIDE SEQUENCE [LARGE SCALE MRNA] (ISOFORM 1)</scope>
    <source>
        <strain>C57BL/6J</strain>
        <tissue>Lung</tissue>
    </source>
</reference>
<reference key="2">
    <citation type="journal article" date="2009" name="PLoS Biol.">
        <title>Lineage-specific biology revealed by a finished genome assembly of the mouse.</title>
        <authorList>
            <person name="Church D.M."/>
            <person name="Goodstadt L."/>
            <person name="Hillier L.W."/>
            <person name="Zody M.C."/>
            <person name="Goldstein S."/>
            <person name="She X."/>
            <person name="Bult C.J."/>
            <person name="Agarwala R."/>
            <person name="Cherry J.L."/>
            <person name="DiCuccio M."/>
            <person name="Hlavina W."/>
            <person name="Kapustin Y."/>
            <person name="Meric P."/>
            <person name="Maglott D."/>
            <person name="Birtle Z."/>
            <person name="Marques A.C."/>
            <person name="Graves T."/>
            <person name="Zhou S."/>
            <person name="Teague B."/>
            <person name="Potamousis K."/>
            <person name="Churas C."/>
            <person name="Place M."/>
            <person name="Herschleb J."/>
            <person name="Runnheim R."/>
            <person name="Forrest D."/>
            <person name="Amos-Landgraf J."/>
            <person name="Schwartz D.C."/>
            <person name="Cheng Z."/>
            <person name="Lindblad-Toh K."/>
            <person name="Eichler E.E."/>
            <person name="Ponting C.P."/>
        </authorList>
    </citation>
    <scope>NUCLEOTIDE SEQUENCE [LARGE SCALE GENOMIC DNA]</scope>
    <source>
        <strain>C57BL/6J</strain>
    </source>
</reference>
<reference key="3">
    <citation type="journal article" date="2004" name="Genome Res.">
        <title>The status, quality, and expansion of the NIH full-length cDNA project: the Mammalian Gene Collection (MGC).</title>
        <authorList>
            <consortium name="The MGC Project Team"/>
        </authorList>
    </citation>
    <scope>NUCLEOTIDE SEQUENCE [LARGE SCALE MRNA] (ISOFORM 2)</scope>
    <source>
        <tissue>Embryo</tissue>
    </source>
</reference>
<reference key="4">
    <citation type="journal article" date="2010" name="Cell">
        <title>A tissue-specific atlas of mouse protein phosphorylation and expression.</title>
        <authorList>
            <person name="Huttlin E.L."/>
            <person name="Jedrychowski M.P."/>
            <person name="Elias J.E."/>
            <person name="Goswami T."/>
            <person name="Rad R."/>
            <person name="Beausoleil S.A."/>
            <person name="Villen J."/>
            <person name="Haas W."/>
            <person name="Sowa M.E."/>
            <person name="Gygi S.P."/>
        </authorList>
    </citation>
    <scope>IDENTIFICATION BY MASS SPECTROMETRY [LARGE SCALE ANALYSIS]</scope>
    <source>
        <tissue>Lung</tissue>
    </source>
</reference>
<organism>
    <name type="scientific">Mus musculus</name>
    <name type="common">Mouse</name>
    <dbReference type="NCBI Taxonomy" id="10090"/>
    <lineage>
        <taxon>Eukaryota</taxon>
        <taxon>Metazoa</taxon>
        <taxon>Chordata</taxon>
        <taxon>Craniata</taxon>
        <taxon>Vertebrata</taxon>
        <taxon>Euteleostomi</taxon>
        <taxon>Mammalia</taxon>
        <taxon>Eutheria</taxon>
        <taxon>Euarchontoglires</taxon>
        <taxon>Glires</taxon>
        <taxon>Rodentia</taxon>
        <taxon>Myomorpha</taxon>
        <taxon>Muroidea</taxon>
        <taxon>Muridae</taxon>
        <taxon>Murinae</taxon>
        <taxon>Mus</taxon>
        <taxon>Mus</taxon>
    </lineage>
</organism>
<protein>
    <recommendedName>
        <fullName>Acyl-coenzyme A oxidase-like protein</fullName>
        <shortName>Acyl-CoA oxidase-like protein</shortName>
        <ecNumber>1.3.3.-</ecNumber>
    </recommendedName>
</protein>